<organism>
    <name type="scientific">Coccidioides immitis (strain RS)</name>
    <name type="common">Valley fever fungus</name>
    <dbReference type="NCBI Taxonomy" id="246410"/>
    <lineage>
        <taxon>Eukaryota</taxon>
        <taxon>Fungi</taxon>
        <taxon>Dikarya</taxon>
        <taxon>Ascomycota</taxon>
        <taxon>Pezizomycotina</taxon>
        <taxon>Eurotiomycetes</taxon>
        <taxon>Eurotiomycetidae</taxon>
        <taxon>Onygenales</taxon>
        <taxon>Onygenaceae</taxon>
        <taxon>Coccidioides</taxon>
    </lineage>
</organism>
<proteinExistence type="inferred from homology"/>
<gene>
    <name type="primary">HSE1</name>
    <name type="ORF">CIMG_01235</name>
</gene>
<dbReference type="EMBL" id="GG704911">
    <property type="protein sequence ID" value="EAS35881.3"/>
    <property type="molecule type" value="Genomic_DNA"/>
</dbReference>
<dbReference type="RefSeq" id="XP_001247464.1">
    <property type="nucleotide sequence ID" value="XM_001247463.2"/>
</dbReference>
<dbReference type="SMR" id="Q1E878"/>
<dbReference type="FunCoup" id="Q1E878">
    <property type="interactions" value="333"/>
</dbReference>
<dbReference type="STRING" id="246410.Q1E878"/>
<dbReference type="GeneID" id="4567917"/>
<dbReference type="KEGG" id="cim:CIMG_01235"/>
<dbReference type="VEuPathDB" id="FungiDB:CIMG_01235"/>
<dbReference type="InParanoid" id="Q1E878"/>
<dbReference type="OMA" id="QVYRDWW"/>
<dbReference type="OrthoDB" id="10255964at2759"/>
<dbReference type="Proteomes" id="UP000001261">
    <property type="component" value="Unassembled WGS sequence"/>
</dbReference>
<dbReference type="GO" id="GO:0010008">
    <property type="term" value="C:endosome membrane"/>
    <property type="evidence" value="ECO:0007669"/>
    <property type="project" value="UniProtKB-SubCell"/>
</dbReference>
<dbReference type="GO" id="GO:0033565">
    <property type="term" value="C:ESCRT-0 complex"/>
    <property type="evidence" value="ECO:0007669"/>
    <property type="project" value="TreeGrafter"/>
</dbReference>
<dbReference type="GO" id="GO:0035091">
    <property type="term" value="F:phosphatidylinositol binding"/>
    <property type="evidence" value="ECO:0007669"/>
    <property type="project" value="InterPro"/>
</dbReference>
<dbReference type="GO" id="GO:0043130">
    <property type="term" value="F:ubiquitin binding"/>
    <property type="evidence" value="ECO:0007669"/>
    <property type="project" value="InterPro"/>
</dbReference>
<dbReference type="GO" id="GO:0043328">
    <property type="term" value="P:protein transport to vacuole involved in ubiquitin-dependent protein catabolic process via the multivesicular body sorting pathway"/>
    <property type="evidence" value="ECO:0007669"/>
    <property type="project" value="TreeGrafter"/>
</dbReference>
<dbReference type="CDD" id="cd21386">
    <property type="entry name" value="GAT_Hse1"/>
    <property type="match status" value="1"/>
</dbReference>
<dbReference type="CDD" id="cd11805">
    <property type="entry name" value="SH3_GRB2_like_C"/>
    <property type="match status" value="1"/>
</dbReference>
<dbReference type="CDD" id="cd16978">
    <property type="entry name" value="VHS_HSE1"/>
    <property type="match status" value="1"/>
</dbReference>
<dbReference type="FunFam" id="2.30.30.40:FF:000072">
    <property type="entry name" value="Unconventional Myosin IB"/>
    <property type="match status" value="1"/>
</dbReference>
<dbReference type="Gene3D" id="1.20.5.1940">
    <property type="match status" value="1"/>
</dbReference>
<dbReference type="Gene3D" id="1.25.40.90">
    <property type="match status" value="1"/>
</dbReference>
<dbReference type="Gene3D" id="2.30.30.40">
    <property type="entry name" value="SH3 Domains"/>
    <property type="match status" value="1"/>
</dbReference>
<dbReference type="InterPro" id="IPR008942">
    <property type="entry name" value="ENTH_VHS"/>
</dbReference>
<dbReference type="InterPro" id="IPR004152">
    <property type="entry name" value="GAT_dom"/>
</dbReference>
<dbReference type="InterPro" id="IPR036028">
    <property type="entry name" value="SH3-like_dom_sf"/>
</dbReference>
<dbReference type="InterPro" id="IPR001452">
    <property type="entry name" value="SH3_domain"/>
</dbReference>
<dbReference type="InterPro" id="IPR050670">
    <property type="entry name" value="STAM"/>
</dbReference>
<dbReference type="InterPro" id="IPR002014">
    <property type="entry name" value="VHS_dom"/>
</dbReference>
<dbReference type="PANTHER" id="PTHR45929">
    <property type="entry name" value="JAK PATHWAY SIGNAL TRANSDUCTION ADAPTOR MOLECULE"/>
    <property type="match status" value="1"/>
</dbReference>
<dbReference type="PANTHER" id="PTHR45929:SF3">
    <property type="entry name" value="JAK PATHWAY SIGNAL TRANSDUCTION ADAPTOR MOLECULE"/>
    <property type="match status" value="1"/>
</dbReference>
<dbReference type="Pfam" id="PF03127">
    <property type="entry name" value="GAT"/>
    <property type="match status" value="1"/>
</dbReference>
<dbReference type="Pfam" id="PF00018">
    <property type="entry name" value="SH3_1"/>
    <property type="match status" value="1"/>
</dbReference>
<dbReference type="Pfam" id="PF00790">
    <property type="entry name" value="VHS"/>
    <property type="match status" value="1"/>
</dbReference>
<dbReference type="PRINTS" id="PR00452">
    <property type="entry name" value="SH3DOMAIN"/>
</dbReference>
<dbReference type="PRINTS" id="PR01887">
    <property type="entry name" value="SPECTRNALPHA"/>
</dbReference>
<dbReference type="SMART" id="SM00326">
    <property type="entry name" value="SH3"/>
    <property type="match status" value="1"/>
</dbReference>
<dbReference type="SMART" id="SM00288">
    <property type="entry name" value="VHS"/>
    <property type="match status" value="1"/>
</dbReference>
<dbReference type="SUPFAM" id="SSF48464">
    <property type="entry name" value="ENTH/VHS domain"/>
    <property type="match status" value="1"/>
</dbReference>
<dbReference type="SUPFAM" id="SSF50044">
    <property type="entry name" value="SH3-domain"/>
    <property type="match status" value="1"/>
</dbReference>
<dbReference type="PROSITE" id="PS50002">
    <property type="entry name" value="SH3"/>
    <property type="match status" value="1"/>
</dbReference>
<dbReference type="PROSITE" id="PS50179">
    <property type="entry name" value="VHS"/>
    <property type="match status" value="1"/>
</dbReference>
<evidence type="ECO:0000250" key="1"/>
<evidence type="ECO:0000255" key="2">
    <source>
        <dbReference type="PROSITE-ProRule" id="PRU00192"/>
    </source>
</evidence>
<evidence type="ECO:0000255" key="3">
    <source>
        <dbReference type="PROSITE-ProRule" id="PRU00218"/>
    </source>
</evidence>
<evidence type="ECO:0000256" key="4">
    <source>
        <dbReference type="SAM" id="MobiDB-lite"/>
    </source>
</evidence>
<evidence type="ECO:0000305" key="5"/>
<reference key="1">
    <citation type="journal article" date="2009" name="Genome Res.">
        <title>Comparative genomic analyses of the human fungal pathogens Coccidioides and their relatives.</title>
        <authorList>
            <person name="Sharpton T.J."/>
            <person name="Stajich J.E."/>
            <person name="Rounsley S.D."/>
            <person name="Gardner M.J."/>
            <person name="Wortman J.R."/>
            <person name="Jordar V.S."/>
            <person name="Maiti R."/>
            <person name="Kodira C.D."/>
            <person name="Neafsey D.E."/>
            <person name="Zeng Q."/>
            <person name="Hung C.-Y."/>
            <person name="McMahan C."/>
            <person name="Muszewska A."/>
            <person name="Grynberg M."/>
            <person name="Mandel M.A."/>
            <person name="Kellner E.M."/>
            <person name="Barker B.M."/>
            <person name="Galgiani J.N."/>
            <person name="Orbach M.J."/>
            <person name="Kirkland T.N."/>
            <person name="Cole G.T."/>
            <person name="Henn M.R."/>
            <person name="Birren B.W."/>
            <person name="Taylor J.W."/>
        </authorList>
    </citation>
    <scope>NUCLEOTIDE SEQUENCE [LARGE SCALE GENOMIC DNA]</scope>
    <source>
        <strain>RS</strain>
    </source>
</reference>
<reference key="2">
    <citation type="journal article" date="2010" name="Genome Res.">
        <title>Population genomic sequencing of Coccidioides fungi reveals recent hybridization and transposon control.</title>
        <authorList>
            <person name="Neafsey D.E."/>
            <person name="Barker B.M."/>
            <person name="Sharpton T.J."/>
            <person name="Stajich J.E."/>
            <person name="Park D.J."/>
            <person name="Whiston E."/>
            <person name="Hung C.-Y."/>
            <person name="McMahan C."/>
            <person name="White J."/>
            <person name="Sykes S."/>
            <person name="Heiman D."/>
            <person name="Young S."/>
            <person name="Zeng Q."/>
            <person name="Abouelleil A."/>
            <person name="Aftuck L."/>
            <person name="Bessette D."/>
            <person name="Brown A."/>
            <person name="FitzGerald M."/>
            <person name="Lui A."/>
            <person name="Macdonald J.P."/>
            <person name="Priest M."/>
            <person name="Orbach M.J."/>
            <person name="Galgiani J.N."/>
            <person name="Kirkland T.N."/>
            <person name="Cole G.T."/>
            <person name="Birren B.W."/>
            <person name="Henn M.R."/>
            <person name="Taylor J.W."/>
            <person name="Rounsley S.D."/>
        </authorList>
    </citation>
    <scope>GENOME REANNOTATION</scope>
    <source>
        <strain>RS</strain>
    </source>
</reference>
<comment type="function">
    <text evidence="1">Component of the ESCRT-0 complex which is the sorting receptor for ubiquitinated cargo proteins at the multivesicular body (MVB).</text>
</comment>
<comment type="subunit">
    <text evidence="1">Component of the ESCRT-0 complex composed of HSE1 and VPS27.</text>
</comment>
<comment type="subcellular location">
    <subcellularLocation>
        <location evidence="1">Endosome membrane</location>
        <topology evidence="1">Peripheral membrane protein</topology>
        <orientation evidence="1">Cytoplasmic side</orientation>
    </subcellularLocation>
</comment>
<comment type="similarity">
    <text evidence="5">Belongs to the STAM family.</text>
</comment>
<name>HSE1_COCIM</name>
<sequence>MFRAQQNAYDDIVAKATDENLTSENWEYILDVCDKVSADESGAKDAVASMIKRLAHRNANVQLYTFELANALSQNCGPKAHRELASKSFTDALLRLANDRNTHPQVKSKILEHMEQWTEMFSSNPDFGIMEHAYMKLKSQNPNIQPPSKPTKRQITELDRQKEEEELQMALALSIKEKQSETSKQQDGSSQHVVTTSAQAEAAPSQGIPSGTTAATVSRVRALYDFQPSEPGELQFRKGDIIAVLESVYKDWWKGSLRGQVGIFPLNYVEKLSDPTQEELQREAQMEAEVFAEIKNVEKLLALLSTSSPELNVQENEEITKLYHSTLAIRPKLIELIGKYSKKKDDFTQLNEKFIKARRDYEALLEASMTHPAQSHYNRPAQPPFAYPPSGTHPGYPHHAPPQQEPQRYYTPRPSQDPQSAPHNTPGYYGAEPSTLPYPPDSQSPDFRKHTATGSMQLPQQQPSQPPQDAYSQGATTHYPPKTTYDHPQELGTSVYDSPQGNAPQAIQHSYHPAMQQELQQQQATGAEPTQRPYSPQENPPPQAPSSNPPYPVQTPQEPPQQSFAPPAPMHQPPPIPSVAPSQGAYGGGYQAYQPPTTQQHSPTSNPAAFYR</sequence>
<protein>
    <recommendedName>
        <fullName>Class E vacuolar protein-sorting machinery protein HSE1</fullName>
    </recommendedName>
</protein>
<keyword id="KW-0967">Endosome</keyword>
<keyword id="KW-0472">Membrane</keyword>
<keyword id="KW-0653">Protein transport</keyword>
<keyword id="KW-1185">Reference proteome</keyword>
<keyword id="KW-0728">SH3 domain</keyword>
<keyword id="KW-0813">Transport</keyword>
<accession>Q1E878</accession>
<accession>J3KIZ1</accession>
<feature type="chain" id="PRO_0000292493" description="Class E vacuolar protein-sorting machinery protein HSE1">
    <location>
        <begin position="1"/>
        <end position="612"/>
    </location>
</feature>
<feature type="domain" description="VHS" evidence="3">
    <location>
        <begin position="16"/>
        <end position="145"/>
    </location>
</feature>
<feature type="domain" description="UIM" evidence="5">
    <location>
        <begin position="162"/>
        <end position="181"/>
    </location>
</feature>
<feature type="domain" description="SH3" evidence="2">
    <location>
        <begin position="215"/>
        <end position="274"/>
    </location>
</feature>
<feature type="region of interest" description="Disordered" evidence="4">
    <location>
        <begin position="176"/>
        <end position="212"/>
    </location>
</feature>
<feature type="region of interest" description="Disordered" evidence="4">
    <location>
        <begin position="372"/>
        <end position="612"/>
    </location>
</feature>
<feature type="compositionally biased region" description="Polar residues" evidence="4">
    <location>
        <begin position="182"/>
        <end position="199"/>
    </location>
</feature>
<feature type="compositionally biased region" description="Polar residues" evidence="4">
    <location>
        <begin position="413"/>
        <end position="423"/>
    </location>
</feature>
<feature type="compositionally biased region" description="Polar residues" evidence="4">
    <location>
        <begin position="491"/>
        <end position="508"/>
    </location>
</feature>
<feature type="compositionally biased region" description="Pro residues" evidence="4">
    <location>
        <begin position="538"/>
        <end position="559"/>
    </location>
</feature>
<feature type="compositionally biased region" description="Pro residues" evidence="4">
    <location>
        <begin position="566"/>
        <end position="578"/>
    </location>
</feature>
<feature type="compositionally biased region" description="Polar residues" evidence="4">
    <location>
        <begin position="597"/>
        <end position="612"/>
    </location>
</feature>